<protein>
    <recommendedName>
        <fullName>Cyclic AMP-dependent transcription factor ATF-1</fullName>
        <shortName>cAMP-dependent transcription factor ATF-1</shortName>
    </recommendedName>
    <alternativeName>
        <fullName>Activating transcription factor 1</fullName>
    </alternativeName>
    <alternativeName>
        <fullName>TCR-ATF1</fullName>
    </alternativeName>
</protein>
<accession>P81269</accession>
<sequence length="269" mass="29238">MEDSHKSNTTETASQPGSTVAGPHVSQIVHQVSSLSESEESQDSSDSIGSSQKAHGILARRPSYRKILKDLSSEDTRGRKGEGENPSISAITSMSVPAPIYQTSSGQYIAIAPNGALQLASPSTDGVQALQTLTMTNSSSTQQGTILQYAQTSDGQQILVPSNQVVVQTASGDMQTYQIRTTPSATSLPQTVVMTSPVTLASQTTKTDDPQLRREIRLMKNREAARECRRKKKEYVKCLENRVAVLENQNKTLIEELKTLKDLYSHKSV</sequence>
<feature type="chain" id="PRO_0000076576" description="Cyclic AMP-dependent transcription factor ATF-1">
    <location>
        <begin position="1"/>
        <end position="269"/>
    </location>
</feature>
<feature type="domain" description="KID" evidence="3">
    <location>
        <begin position="31"/>
        <end position="90"/>
    </location>
</feature>
<feature type="domain" description="bZIP" evidence="4">
    <location>
        <begin position="211"/>
        <end position="269"/>
    </location>
</feature>
<feature type="region of interest" description="Disordered" evidence="5">
    <location>
        <begin position="1"/>
        <end position="90"/>
    </location>
</feature>
<feature type="region of interest" description="Basic motif" evidence="4">
    <location>
        <begin position="213"/>
        <end position="237"/>
    </location>
</feature>
<feature type="region of interest" description="Leucine-zipper" evidence="4">
    <location>
        <begin position="239"/>
        <end position="260"/>
    </location>
</feature>
<feature type="compositionally biased region" description="Polar residues" evidence="5">
    <location>
        <begin position="9"/>
        <end position="18"/>
    </location>
</feature>
<feature type="compositionally biased region" description="Basic and acidic residues" evidence="5">
    <location>
        <begin position="67"/>
        <end position="83"/>
    </location>
</feature>
<feature type="modified residue" description="Phosphoserine; by CaMK1, CDK3, RPS6KA4 and RPS6KA5" evidence="9">
    <location>
        <position position="63"/>
    </location>
</feature>
<feature type="modified residue" description="Phosphoserine; by HIPK2" evidence="2 3">
    <location>
        <position position="196"/>
    </location>
</feature>
<feature type="cross-link" description="Glycyl lysine isopeptide (Lys-Gly) (interchain with G-Cter in SUMO2)" evidence="2">
    <location>
        <position position="206"/>
    </location>
</feature>
<comment type="function">
    <text evidence="1">Binds the cAMP response element (CRE) (consensus: 5'-GTGACGT[AC][AG]-3'), a sequence present in many viral and cellular promoters. Binds to the Tax-responsive element (TRE) of HTLV-I. Mediates PKA-induced stimulation of CRE-reporter genes. Represses the expression of FTH1 and other antioxidant detoxification genes. Triggers cell proliferation and transformation (By similarity).</text>
</comment>
<comment type="subunit">
    <text evidence="2">Binds DNA as a dimer. Interacts with HIPK2 and CDK3. Interacts with MOTS-c, a peptide produced by the mitochondrially encoded 12S rRNA MT-RNR1; the interaction occurs in the nucleus following metabolic stress.</text>
</comment>
<comment type="subcellular location">
    <subcellularLocation>
        <location evidence="6">Nucleus</location>
    </subcellularLocation>
</comment>
<comment type="PTM">
    <text evidence="1 7">Phosphorylated at Ser-196 by HIPK2 in response to genotoxic stress. This phosphorylation promotes transcription repression of FTH1 and other antioxidant detoxification genes. The CDK3-mediated phosphorylation at Ser-63 promotes its transactivation and transcriptional activities (By similarity). Phosphorylated at Ser-63 by RPS6KA4 and RPS6KA5 in response to mitogenic or stress stimuli.</text>
</comment>
<comment type="similarity">
    <text evidence="8">Belongs to the bZIP family. ATF subfamily.</text>
</comment>
<proteinExistence type="evidence at protein level"/>
<dbReference type="EMBL" id="M63725">
    <property type="protein sequence ID" value="AAA40395.1"/>
    <property type="molecule type" value="mRNA"/>
</dbReference>
<dbReference type="CCDS" id="CCDS27832.1"/>
<dbReference type="PIR" id="A46490">
    <property type="entry name" value="A46490"/>
</dbReference>
<dbReference type="RefSeq" id="NP_001397298.1">
    <property type="nucleotide sequence ID" value="NM_001410369.1"/>
</dbReference>
<dbReference type="RefSeq" id="NP_001397299.1">
    <property type="nucleotide sequence ID" value="NM_001410370.1"/>
</dbReference>
<dbReference type="RefSeq" id="NP_031523.3">
    <property type="nucleotide sequence ID" value="NM_007497.3"/>
</dbReference>
<dbReference type="RefSeq" id="XP_006520414.1">
    <property type="nucleotide sequence ID" value="XM_006520351.3"/>
</dbReference>
<dbReference type="RefSeq" id="XP_006520415.1">
    <property type="nucleotide sequence ID" value="XM_006520352.3"/>
</dbReference>
<dbReference type="SMR" id="P81269"/>
<dbReference type="BioGRID" id="198232">
    <property type="interactions" value="2"/>
</dbReference>
<dbReference type="ComplexPortal" id="CPX-7">
    <property type="entry name" value="bZIP transcription factor complex, Atf1-Atf4"/>
</dbReference>
<dbReference type="FunCoup" id="P81269">
    <property type="interactions" value="2783"/>
</dbReference>
<dbReference type="IntAct" id="P81269">
    <property type="interactions" value="2"/>
</dbReference>
<dbReference type="STRING" id="10090.ENSMUSP00000023769"/>
<dbReference type="GlyGen" id="P81269">
    <property type="glycosylation" value="4 sites, 1 O-linked glycan (4 sites)"/>
</dbReference>
<dbReference type="iPTMnet" id="P81269"/>
<dbReference type="PhosphoSitePlus" id="P81269"/>
<dbReference type="PaxDb" id="10090-ENSMUSP00000023769"/>
<dbReference type="PeptideAtlas" id="P81269"/>
<dbReference type="ProteomicsDB" id="265141"/>
<dbReference type="Pumba" id="P81269"/>
<dbReference type="Antibodypedia" id="4260">
    <property type="antibodies" value="702 antibodies from 43 providers"/>
</dbReference>
<dbReference type="DNASU" id="11908"/>
<dbReference type="Ensembl" id="ENSMUST00000023769.11">
    <property type="protein sequence ID" value="ENSMUSP00000023769.5"/>
    <property type="gene ID" value="ENSMUSG00000023027.14"/>
</dbReference>
<dbReference type="GeneID" id="11908"/>
<dbReference type="KEGG" id="mmu:11908"/>
<dbReference type="UCSC" id="uc007xqs.1">
    <property type="organism name" value="mouse"/>
</dbReference>
<dbReference type="AGR" id="MGI:1298366"/>
<dbReference type="CTD" id="466"/>
<dbReference type="MGI" id="MGI:1298366">
    <property type="gene designation" value="Atf1"/>
</dbReference>
<dbReference type="VEuPathDB" id="HostDB:ENSMUSG00000023027"/>
<dbReference type="eggNOG" id="KOG3584">
    <property type="taxonomic scope" value="Eukaryota"/>
</dbReference>
<dbReference type="GeneTree" id="ENSGT00940000158200"/>
<dbReference type="HOGENOM" id="CLU_042675_1_0_1"/>
<dbReference type="InParanoid" id="P81269"/>
<dbReference type="OMA" id="AVQGTHI"/>
<dbReference type="OrthoDB" id="5970722at2759"/>
<dbReference type="PhylomeDB" id="P81269"/>
<dbReference type="TreeFam" id="TF106464"/>
<dbReference type="Reactome" id="R-MMU-199920">
    <property type="pathway name" value="CREB phosphorylation"/>
</dbReference>
<dbReference type="BioGRID-ORCS" id="11908">
    <property type="hits" value="3 hits in 81 CRISPR screens"/>
</dbReference>
<dbReference type="ChiTaRS" id="Atf1">
    <property type="organism name" value="mouse"/>
</dbReference>
<dbReference type="PRO" id="PR:P81269"/>
<dbReference type="Proteomes" id="UP000000589">
    <property type="component" value="Chromosome 15"/>
</dbReference>
<dbReference type="RNAct" id="P81269">
    <property type="molecule type" value="protein"/>
</dbReference>
<dbReference type="Bgee" id="ENSMUSG00000023027">
    <property type="expression patterns" value="Expressed in cumulus cell and 268 other cell types or tissues"/>
</dbReference>
<dbReference type="ExpressionAtlas" id="P81269">
    <property type="expression patterns" value="baseline and differential"/>
</dbReference>
<dbReference type="GO" id="GO:1990590">
    <property type="term" value="C:ATF1-ATF4 transcription factor complex"/>
    <property type="evidence" value="ECO:0000314"/>
    <property type="project" value="ParkinsonsUK-UCL"/>
</dbReference>
<dbReference type="GO" id="GO:0005654">
    <property type="term" value="C:nucleoplasm"/>
    <property type="evidence" value="ECO:0007669"/>
    <property type="project" value="Ensembl"/>
</dbReference>
<dbReference type="GO" id="GO:0005634">
    <property type="term" value="C:nucleus"/>
    <property type="evidence" value="ECO:0000266"/>
    <property type="project" value="MGI"/>
</dbReference>
<dbReference type="GO" id="GO:0090575">
    <property type="term" value="C:RNA polymerase II transcription regulator complex"/>
    <property type="evidence" value="ECO:0000353"/>
    <property type="project" value="ComplexPortal"/>
</dbReference>
<dbReference type="GO" id="GO:0005667">
    <property type="term" value="C:transcription regulator complex"/>
    <property type="evidence" value="ECO:0000314"/>
    <property type="project" value="MGI"/>
</dbReference>
<dbReference type="GO" id="GO:0003677">
    <property type="term" value="F:DNA binding"/>
    <property type="evidence" value="ECO:0000314"/>
    <property type="project" value="MGI"/>
</dbReference>
<dbReference type="GO" id="GO:0001228">
    <property type="term" value="F:DNA-binding transcription activator activity, RNA polymerase II-specific"/>
    <property type="evidence" value="ECO:0007669"/>
    <property type="project" value="Ensembl"/>
</dbReference>
<dbReference type="GO" id="GO:0042802">
    <property type="term" value="F:identical protein binding"/>
    <property type="evidence" value="ECO:0007669"/>
    <property type="project" value="Ensembl"/>
</dbReference>
<dbReference type="GO" id="GO:0044877">
    <property type="term" value="F:protein-containing complex binding"/>
    <property type="evidence" value="ECO:0007669"/>
    <property type="project" value="Ensembl"/>
</dbReference>
<dbReference type="GO" id="GO:0000977">
    <property type="term" value="F:RNA polymerase II transcription regulatory region sequence-specific DNA binding"/>
    <property type="evidence" value="ECO:0007669"/>
    <property type="project" value="Ensembl"/>
</dbReference>
<dbReference type="GO" id="GO:0141156">
    <property type="term" value="P:cAMP/PKA signal transduction"/>
    <property type="evidence" value="ECO:0007669"/>
    <property type="project" value="Ensembl"/>
</dbReference>
<dbReference type="GO" id="GO:0140928">
    <property type="term" value="P:inhibition of non-skeletal tissue mineralization"/>
    <property type="evidence" value="ECO:0000266"/>
    <property type="project" value="MGI"/>
</dbReference>
<dbReference type="GO" id="GO:0045740">
    <property type="term" value="P:positive regulation of DNA replication"/>
    <property type="evidence" value="ECO:0007669"/>
    <property type="project" value="Ensembl"/>
</dbReference>
<dbReference type="GO" id="GO:0010976">
    <property type="term" value="P:positive regulation of neuron projection development"/>
    <property type="evidence" value="ECO:0007669"/>
    <property type="project" value="Ensembl"/>
</dbReference>
<dbReference type="GO" id="GO:0045944">
    <property type="term" value="P:positive regulation of transcription by RNA polymerase II"/>
    <property type="evidence" value="ECO:0000314"/>
    <property type="project" value="ComplexPortal"/>
</dbReference>
<dbReference type="GO" id="GO:0065003">
    <property type="term" value="P:protein-containing complex assembly"/>
    <property type="evidence" value="ECO:0007669"/>
    <property type="project" value="Ensembl"/>
</dbReference>
<dbReference type="GO" id="GO:0032025">
    <property type="term" value="P:response to cobalt ion"/>
    <property type="evidence" value="ECO:0007669"/>
    <property type="project" value="Ensembl"/>
</dbReference>
<dbReference type="GO" id="GO:0014074">
    <property type="term" value="P:response to purine-containing compound"/>
    <property type="evidence" value="ECO:0007669"/>
    <property type="project" value="Ensembl"/>
</dbReference>
<dbReference type="CDD" id="cd14690">
    <property type="entry name" value="bZIP_CREB1"/>
    <property type="match status" value="1"/>
</dbReference>
<dbReference type="FunFam" id="1.20.5.170:FF:000003">
    <property type="entry name" value="cAMP-responsive element modulator isoform X2"/>
    <property type="match status" value="1"/>
</dbReference>
<dbReference type="Gene3D" id="1.20.5.170">
    <property type="match status" value="1"/>
</dbReference>
<dbReference type="InterPro" id="IPR004827">
    <property type="entry name" value="bZIP"/>
</dbReference>
<dbReference type="InterPro" id="IPR046347">
    <property type="entry name" value="bZIP_sf"/>
</dbReference>
<dbReference type="InterPro" id="IPR003102">
    <property type="entry name" value="CREB1-like_pKID"/>
</dbReference>
<dbReference type="InterPro" id="IPR001630">
    <property type="entry name" value="Leuzip_CREB"/>
</dbReference>
<dbReference type="PANTHER" id="PTHR45879">
    <property type="entry name" value="CYCLIC AMP RESPONSE ELEMENT-BINDING PROTEIN B"/>
    <property type="match status" value="1"/>
</dbReference>
<dbReference type="PANTHER" id="PTHR45879:SF2">
    <property type="entry name" value="CYCLIC AMP-DEPENDENT TRANSCRIPTION FACTOR ATF-1"/>
    <property type="match status" value="1"/>
</dbReference>
<dbReference type="Pfam" id="PF00170">
    <property type="entry name" value="bZIP_1"/>
    <property type="match status" value="1"/>
</dbReference>
<dbReference type="Pfam" id="PF02173">
    <property type="entry name" value="pKID"/>
    <property type="match status" value="1"/>
</dbReference>
<dbReference type="PRINTS" id="PR00041">
    <property type="entry name" value="LEUZIPPRCREB"/>
</dbReference>
<dbReference type="SMART" id="SM00338">
    <property type="entry name" value="BRLZ"/>
    <property type="match status" value="1"/>
</dbReference>
<dbReference type="SUPFAM" id="SSF57959">
    <property type="entry name" value="Leucine zipper domain"/>
    <property type="match status" value="1"/>
</dbReference>
<dbReference type="PROSITE" id="PS50217">
    <property type="entry name" value="BZIP"/>
    <property type="match status" value="1"/>
</dbReference>
<dbReference type="PROSITE" id="PS00036">
    <property type="entry name" value="BZIP_BASIC"/>
    <property type="match status" value="1"/>
</dbReference>
<dbReference type="PROSITE" id="PS50953">
    <property type="entry name" value="KID"/>
    <property type="match status" value="1"/>
</dbReference>
<organism>
    <name type="scientific">Mus musculus</name>
    <name type="common">Mouse</name>
    <dbReference type="NCBI Taxonomy" id="10090"/>
    <lineage>
        <taxon>Eukaryota</taxon>
        <taxon>Metazoa</taxon>
        <taxon>Chordata</taxon>
        <taxon>Craniata</taxon>
        <taxon>Vertebrata</taxon>
        <taxon>Euteleostomi</taxon>
        <taxon>Mammalia</taxon>
        <taxon>Eutheria</taxon>
        <taxon>Euarchontoglires</taxon>
        <taxon>Glires</taxon>
        <taxon>Rodentia</taxon>
        <taxon>Myomorpha</taxon>
        <taxon>Muroidea</taxon>
        <taxon>Muridae</taxon>
        <taxon>Murinae</taxon>
        <taxon>Mus</taxon>
        <taxon>Mus</taxon>
    </lineage>
</organism>
<keyword id="KW-0010">Activator</keyword>
<keyword id="KW-0238">DNA-binding</keyword>
<keyword id="KW-1017">Isopeptide bond</keyword>
<keyword id="KW-0539">Nucleus</keyword>
<keyword id="KW-0597">Phosphoprotein</keyword>
<keyword id="KW-1185">Reference proteome</keyword>
<keyword id="KW-0804">Transcription</keyword>
<keyword id="KW-0805">Transcription regulation</keyword>
<keyword id="KW-0832">Ubl conjugation</keyword>
<evidence type="ECO:0000250" key="1"/>
<evidence type="ECO:0000250" key="2">
    <source>
        <dbReference type="UniProtKB" id="P18846"/>
    </source>
</evidence>
<evidence type="ECO:0000255" key="3">
    <source>
        <dbReference type="PROSITE-ProRule" id="PRU00312"/>
    </source>
</evidence>
<evidence type="ECO:0000255" key="4">
    <source>
        <dbReference type="PROSITE-ProRule" id="PRU00978"/>
    </source>
</evidence>
<evidence type="ECO:0000256" key="5">
    <source>
        <dbReference type="SAM" id="MobiDB-lite"/>
    </source>
</evidence>
<evidence type="ECO:0000269" key="6">
    <source>
    </source>
</evidence>
<evidence type="ECO:0000269" key="7">
    <source>
    </source>
</evidence>
<evidence type="ECO:0000305" key="8"/>
<evidence type="ECO:0000305" key="9">
    <source>
    </source>
</evidence>
<name>ATF1_MOUSE</name>
<gene>
    <name type="primary">Atf1</name>
</gene>
<reference key="1">
    <citation type="journal article" date="1992" name="J. Immunol.">
        <title>Isolation and characterization of nuclear proteins that bind to T cell receptor V beta decamer motif.</title>
        <authorList>
            <person name="Lee M.-R."/>
            <person name="Chung C.-S."/>
            <person name="Liou M.-L."/>
            <person name="Wu M."/>
            <person name="Li W.-F."/>
            <person name="Hsueh Y.-P."/>
            <person name="Lai M.-Z."/>
        </authorList>
    </citation>
    <scope>NUCLEOTIDE SEQUENCE [MRNA]</scope>
    <scope>SUBCELLULAR LOCATION</scope>
</reference>
<reference key="2">
    <citation type="journal article" date="2008" name="Nat. Immunol.">
        <title>The kinases MSK1 and MSK2 act as negative regulators of Toll-like receptor signaling.</title>
        <authorList>
            <person name="Ananieva O."/>
            <person name="Darragh J."/>
            <person name="Johansen C."/>
            <person name="Carr J.M."/>
            <person name="McIlrath J."/>
            <person name="Park J.M."/>
            <person name="Wingate A."/>
            <person name="Monk C.E."/>
            <person name="Toth R."/>
            <person name="Santos S.G."/>
            <person name="Iversen L."/>
            <person name="Arthur J.S."/>
        </authorList>
    </citation>
    <scope>PHOSPHORYLATION AT SER-63</scope>
</reference>